<comment type="function">
    <text evidence="1">Binds to 23S rRNA. Forms part of two intersubunit bridges in the 70S ribosome.</text>
</comment>
<comment type="subunit">
    <text evidence="1">Part of the 50S ribosomal subunit. Forms a cluster with proteins L3 and L19. In the 70S ribosome, L14 and L19 interact and together make contacts with the 16S rRNA in bridges B5 and B8.</text>
</comment>
<comment type="similarity">
    <text evidence="1">Belongs to the universal ribosomal protein uL14 family.</text>
</comment>
<accession>A6LEI1</accession>
<dbReference type="EMBL" id="CP000140">
    <property type="protein sequence ID" value="ABR44095.1"/>
    <property type="molecule type" value="Genomic_DNA"/>
</dbReference>
<dbReference type="RefSeq" id="WP_005853982.1">
    <property type="nucleotide sequence ID" value="NZ_LR215978.1"/>
</dbReference>
<dbReference type="SMR" id="A6LEI1"/>
<dbReference type="STRING" id="435591.BDI_2370"/>
<dbReference type="PaxDb" id="435591-BDI_2370"/>
<dbReference type="GeneID" id="93522363"/>
<dbReference type="KEGG" id="pdi:BDI_2370"/>
<dbReference type="eggNOG" id="COG0093">
    <property type="taxonomic scope" value="Bacteria"/>
</dbReference>
<dbReference type="HOGENOM" id="CLU_095071_2_1_10"/>
<dbReference type="BioCyc" id="PDIS435591:G1G5A-2435-MONOMER"/>
<dbReference type="Proteomes" id="UP000000566">
    <property type="component" value="Chromosome"/>
</dbReference>
<dbReference type="GO" id="GO:0022625">
    <property type="term" value="C:cytosolic large ribosomal subunit"/>
    <property type="evidence" value="ECO:0007669"/>
    <property type="project" value="TreeGrafter"/>
</dbReference>
<dbReference type="GO" id="GO:0070180">
    <property type="term" value="F:large ribosomal subunit rRNA binding"/>
    <property type="evidence" value="ECO:0007669"/>
    <property type="project" value="TreeGrafter"/>
</dbReference>
<dbReference type="GO" id="GO:0003735">
    <property type="term" value="F:structural constituent of ribosome"/>
    <property type="evidence" value="ECO:0007669"/>
    <property type="project" value="InterPro"/>
</dbReference>
<dbReference type="GO" id="GO:0006412">
    <property type="term" value="P:translation"/>
    <property type="evidence" value="ECO:0007669"/>
    <property type="project" value="UniProtKB-UniRule"/>
</dbReference>
<dbReference type="CDD" id="cd00337">
    <property type="entry name" value="Ribosomal_uL14"/>
    <property type="match status" value="1"/>
</dbReference>
<dbReference type="FunFam" id="2.40.150.20:FF:000001">
    <property type="entry name" value="50S ribosomal protein L14"/>
    <property type="match status" value="1"/>
</dbReference>
<dbReference type="Gene3D" id="2.40.150.20">
    <property type="entry name" value="Ribosomal protein L14"/>
    <property type="match status" value="1"/>
</dbReference>
<dbReference type="HAMAP" id="MF_01367">
    <property type="entry name" value="Ribosomal_uL14"/>
    <property type="match status" value="1"/>
</dbReference>
<dbReference type="InterPro" id="IPR000218">
    <property type="entry name" value="Ribosomal_uL14"/>
</dbReference>
<dbReference type="InterPro" id="IPR005745">
    <property type="entry name" value="Ribosomal_uL14_bac-type"/>
</dbReference>
<dbReference type="InterPro" id="IPR019972">
    <property type="entry name" value="Ribosomal_uL14_CS"/>
</dbReference>
<dbReference type="InterPro" id="IPR036853">
    <property type="entry name" value="Ribosomal_uL14_sf"/>
</dbReference>
<dbReference type="NCBIfam" id="TIGR01067">
    <property type="entry name" value="rplN_bact"/>
    <property type="match status" value="1"/>
</dbReference>
<dbReference type="PANTHER" id="PTHR11761">
    <property type="entry name" value="50S/60S RIBOSOMAL PROTEIN L14/L23"/>
    <property type="match status" value="1"/>
</dbReference>
<dbReference type="PANTHER" id="PTHR11761:SF3">
    <property type="entry name" value="LARGE RIBOSOMAL SUBUNIT PROTEIN UL14M"/>
    <property type="match status" value="1"/>
</dbReference>
<dbReference type="Pfam" id="PF00238">
    <property type="entry name" value="Ribosomal_L14"/>
    <property type="match status" value="1"/>
</dbReference>
<dbReference type="SMART" id="SM01374">
    <property type="entry name" value="Ribosomal_L14"/>
    <property type="match status" value="1"/>
</dbReference>
<dbReference type="SUPFAM" id="SSF50193">
    <property type="entry name" value="Ribosomal protein L14"/>
    <property type="match status" value="1"/>
</dbReference>
<dbReference type="PROSITE" id="PS00049">
    <property type="entry name" value="RIBOSOMAL_L14"/>
    <property type="match status" value="1"/>
</dbReference>
<sequence length="121" mass="13033">MIQQESRLVVADNSGAKEALCIRVLGGTRKRYATVGDVIVVAIKSVIPASDVKKGAVSKAIIVRTKKEIRRPDGSYIRFDDNACVLLNAGGDIRGSRIFGPVARELRATNMKIVSLAPEVL</sequence>
<organism>
    <name type="scientific">Parabacteroides distasonis (strain ATCC 8503 / DSM 20701 / CIP 104284 / JCM 5825 / NCTC 11152)</name>
    <dbReference type="NCBI Taxonomy" id="435591"/>
    <lineage>
        <taxon>Bacteria</taxon>
        <taxon>Pseudomonadati</taxon>
        <taxon>Bacteroidota</taxon>
        <taxon>Bacteroidia</taxon>
        <taxon>Bacteroidales</taxon>
        <taxon>Tannerellaceae</taxon>
        <taxon>Parabacteroides</taxon>
    </lineage>
</organism>
<gene>
    <name evidence="1" type="primary">rplN</name>
    <name type="ordered locus">BDI_2370</name>
</gene>
<name>RL14_PARD8</name>
<protein>
    <recommendedName>
        <fullName evidence="1">Large ribosomal subunit protein uL14</fullName>
    </recommendedName>
    <alternativeName>
        <fullName evidence="2">50S ribosomal protein L14</fullName>
    </alternativeName>
</protein>
<proteinExistence type="inferred from homology"/>
<evidence type="ECO:0000255" key="1">
    <source>
        <dbReference type="HAMAP-Rule" id="MF_01367"/>
    </source>
</evidence>
<evidence type="ECO:0000305" key="2"/>
<feature type="chain" id="PRO_1000055658" description="Large ribosomal subunit protein uL14">
    <location>
        <begin position="1"/>
        <end position="121"/>
    </location>
</feature>
<reference key="1">
    <citation type="journal article" date="2007" name="PLoS Biol.">
        <title>Evolution of symbiotic bacteria in the distal human intestine.</title>
        <authorList>
            <person name="Xu J."/>
            <person name="Mahowald M.A."/>
            <person name="Ley R.E."/>
            <person name="Lozupone C.A."/>
            <person name="Hamady M."/>
            <person name="Martens E.C."/>
            <person name="Henrissat B."/>
            <person name="Coutinho P.M."/>
            <person name="Minx P."/>
            <person name="Latreille P."/>
            <person name="Cordum H."/>
            <person name="Van Brunt A."/>
            <person name="Kim K."/>
            <person name="Fulton R.S."/>
            <person name="Fulton L.A."/>
            <person name="Clifton S.W."/>
            <person name="Wilson R.K."/>
            <person name="Knight R.D."/>
            <person name="Gordon J.I."/>
        </authorList>
    </citation>
    <scope>NUCLEOTIDE SEQUENCE [LARGE SCALE GENOMIC DNA]</scope>
    <source>
        <strain>ATCC 8503 / DSM 20701 / CIP 104284 / JCM 5825 / NCTC 11152</strain>
    </source>
</reference>
<keyword id="KW-1185">Reference proteome</keyword>
<keyword id="KW-0687">Ribonucleoprotein</keyword>
<keyword id="KW-0689">Ribosomal protein</keyword>
<keyword id="KW-0694">RNA-binding</keyword>
<keyword id="KW-0699">rRNA-binding</keyword>